<accession>O31628</accession>
<evidence type="ECO:0000255" key="1">
    <source>
        <dbReference type="PROSITE-ProRule" id="PRU00532"/>
    </source>
</evidence>
<evidence type="ECO:0000305" key="2"/>
<evidence type="ECO:0007829" key="3">
    <source>
        <dbReference type="PDB" id="1Q2Y"/>
    </source>
</evidence>
<gene>
    <name type="primary">yjcF</name>
    <name type="ordered locus">BSU11840</name>
</gene>
<reference key="1">
    <citation type="journal article" date="1997" name="Nature">
        <title>The complete genome sequence of the Gram-positive bacterium Bacillus subtilis.</title>
        <authorList>
            <person name="Kunst F."/>
            <person name="Ogasawara N."/>
            <person name="Moszer I."/>
            <person name="Albertini A.M."/>
            <person name="Alloni G."/>
            <person name="Azevedo V."/>
            <person name="Bertero M.G."/>
            <person name="Bessieres P."/>
            <person name="Bolotin A."/>
            <person name="Borchert S."/>
            <person name="Borriss R."/>
            <person name="Boursier L."/>
            <person name="Brans A."/>
            <person name="Braun M."/>
            <person name="Brignell S.C."/>
            <person name="Bron S."/>
            <person name="Brouillet S."/>
            <person name="Bruschi C.V."/>
            <person name="Caldwell B."/>
            <person name="Capuano V."/>
            <person name="Carter N.M."/>
            <person name="Choi S.-K."/>
            <person name="Codani J.-J."/>
            <person name="Connerton I.F."/>
            <person name="Cummings N.J."/>
            <person name="Daniel R.A."/>
            <person name="Denizot F."/>
            <person name="Devine K.M."/>
            <person name="Duesterhoeft A."/>
            <person name="Ehrlich S.D."/>
            <person name="Emmerson P.T."/>
            <person name="Entian K.-D."/>
            <person name="Errington J."/>
            <person name="Fabret C."/>
            <person name="Ferrari E."/>
            <person name="Foulger D."/>
            <person name="Fritz C."/>
            <person name="Fujita M."/>
            <person name="Fujita Y."/>
            <person name="Fuma S."/>
            <person name="Galizzi A."/>
            <person name="Galleron N."/>
            <person name="Ghim S.-Y."/>
            <person name="Glaser P."/>
            <person name="Goffeau A."/>
            <person name="Golightly E.J."/>
            <person name="Grandi G."/>
            <person name="Guiseppi G."/>
            <person name="Guy B.J."/>
            <person name="Haga K."/>
            <person name="Haiech J."/>
            <person name="Harwood C.R."/>
            <person name="Henaut A."/>
            <person name="Hilbert H."/>
            <person name="Holsappel S."/>
            <person name="Hosono S."/>
            <person name="Hullo M.-F."/>
            <person name="Itaya M."/>
            <person name="Jones L.-M."/>
            <person name="Joris B."/>
            <person name="Karamata D."/>
            <person name="Kasahara Y."/>
            <person name="Klaerr-Blanchard M."/>
            <person name="Klein C."/>
            <person name="Kobayashi Y."/>
            <person name="Koetter P."/>
            <person name="Koningstein G."/>
            <person name="Krogh S."/>
            <person name="Kumano M."/>
            <person name="Kurita K."/>
            <person name="Lapidus A."/>
            <person name="Lardinois S."/>
            <person name="Lauber J."/>
            <person name="Lazarevic V."/>
            <person name="Lee S.-M."/>
            <person name="Levine A."/>
            <person name="Liu H."/>
            <person name="Masuda S."/>
            <person name="Mauel C."/>
            <person name="Medigue C."/>
            <person name="Medina N."/>
            <person name="Mellado R.P."/>
            <person name="Mizuno M."/>
            <person name="Moestl D."/>
            <person name="Nakai S."/>
            <person name="Noback M."/>
            <person name="Noone D."/>
            <person name="O'Reilly M."/>
            <person name="Ogawa K."/>
            <person name="Ogiwara A."/>
            <person name="Oudega B."/>
            <person name="Park S.-H."/>
            <person name="Parro V."/>
            <person name="Pohl T.M."/>
            <person name="Portetelle D."/>
            <person name="Porwollik S."/>
            <person name="Prescott A.M."/>
            <person name="Presecan E."/>
            <person name="Pujic P."/>
            <person name="Purnelle B."/>
            <person name="Rapoport G."/>
            <person name="Rey M."/>
            <person name="Reynolds S."/>
            <person name="Rieger M."/>
            <person name="Rivolta C."/>
            <person name="Rocha E."/>
            <person name="Roche B."/>
            <person name="Rose M."/>
            <person name="Sadaie Y."/>
            <person name="Sato T."/>
            <person name="Scanlan E."/>
            <person name="Schleich S."/>
            <person name="Schroeter R."/>
            <person name="Scoffone F."/>
            <person name="Sekiguchi J."/>
            <person name="Sekowska A."/>
            <person name="Seror S.J."/>
            <person name="Serror P."/>
            <person name="Shin B.-S."/>
            <person name="Soldo B."/>
            <person name="Sorokin A."/>
            <person name="Tacconi E."/>
            <person name="Takagi T."/>
            <person name="Takahashi H."/>
            <person name="Takemaru K."/>
            <person name="Takeuchi M."/>
            <person name="Tamakoshi A."/>
            <person name="Tanaka T."/>
            <person name="Terpstra P."/>
            <person name="Tognoni A."/>
            <person name="Tosato V."/>
            <person name="Uchiyama S."/>
            <person name="Vandenbol M."/>
            <person name="Vannier F."/>
            <person name="Vassarotti A."/>
            <person name="Viari A."/>
            <person name="Wambutt R."/>
            <person name="Wedler E."/>
            <person name="Wedler H."/>
            <person name="Weitzenegger T."/>
            <person name="Winters P."/>
            <person name="Wipat A."/>
            <person name="Yamamoto H."/>
            <person name="Yamane K."/>
            <person name="Yasumoto K."/>
            <person name="Yata K."/>
            <person name="Yoshida K."/>
            <person name="Yoshikawa H.-F."/>
            <person name="Zumstein E."/>
            <person name="Yoshikawa H."/>
            <person name="Danchin A."/>
        </authorList>
    </citation>
    <scope>NUCLEOTIDE SEQUENCE [LARGE SCALE GENOMIC DNA]</scope>
    <source>
        <strain>168</strain>
    </source>
</reference>
<reference key="2">
    <citation type="submission" date="2005-01" db="PDB data bank">
        <title>Crystal structure of the protein yjcf from Bacillus subtilis: a member of the GCN5-related N-acetyltransferase superfamily.</title>
        <authorList>
            <consortium name="New York structural genomix research consortium (NYSGXRC)"/>
        </authorList>
    </citation>
    <scope>X-RAY CRYSTALLOGRAPHY (2.0 ANGSTROMS)</scope>
</reference>
<name>YJCF_BACSU</name>
<organism>
    <name type="scientific">Bacillus subtilis (strain 168)</name>
    <dbReference type="NCBI Taxonomy" id="224308"/>
    <lineage>
        <taxon>Bacteria</taxon>
        <taxon>Bacillati</taxon>
        <taxon>Bacillota</taxon>
        <taxon>Bacilli</taxon>
        <taxon>Bacillales</taxon>
        <taxon>Bacillaceae</taxon>
        <taxon>Bacillus</taxon>
    </lineage>
</organism>
<feature type="chain" id="PRO_0000360495" description="Uncharacterized N-acetyltransferase YjcF">
    <location>
        <begin position="1"/>
        <end position="140"/>
    </location>
</feature>
<feature type="domain" description="N-acetyltransferase" evidence="1">
    <location>
        <begin position="2"/>
        <end position="140"/>
    </location>
</feature>
<feature type="strand" evidence="3">
    <location>
        <begin position="2"/>
        <end position="6"/>
    </location>
</feature>
<feature type="helix" evidence="3">
    <location>
        <begin position="9"/>
        <end position="23"/>
    </location>
</feature>
<feature type="turn" evidence="3">
    <location>
        <begin position="24"/>
        <end position="26"/>
    </location>
</feature>
<feature type="turn" evidence="3">
    <location>
        <begin position="31"/>
        <end position="34"/>
    </location>
</feature>
<feature type="helix" evidence="3">
    <location>
        <begin position="39"/>
        <end position="41"/>
    </location>
</feature>
<feature type="strand" evidence="3">
    <location>
        <begin position="42"/>
        <end position="49"/>
    </location>
</feature>
<feature type="strand" evidence="3">
    <location>
        <begin position="52"/>
        <end position="62"/>
    </location>
</feature>
<feature type="strand" evidence="3">
    <location>
        <begin position="65"/>
        <end position="72"/>
    </location>
</feature>
<feature type="helix" evidence="3">
    <location>
        <begin position="75"/>
        <end position="77"/>
    </location>
</feature>
<feature type="turn" evidence="3">
    <location>
        <begin position="78"/>
        <end position="81"/>
    </location>
</feature>
<feature type="helix" evidence="3">
    <location>
        <begin position="82"/>
        <end position="96"/>
    </location>
</feature>
<feature type="strand" evidence="3">
    <location>
        <begin position="101"/>
        <end position="107"/>
    </location>
</feature>
<feature type="helix" evidence="3">
    <location>
        <begin position="108"/>
        <end position="110"/>
    </location>
</feature>
<feature type="helix" evidence="3">
    <location>
        <begin position="111"/>
        <end position="116"/>
    </location>
</feature>
<feature type="strand" evidence="3">
    <location>
        <begin position="120"/>
        <end position="122"/>
    </location>
</feature>
<feature type="strand" evidence="3">
    <location>
        <begin position="127"/>
        <end position="139"/>
    </location>
</feature>
<proteinExistence type="evidence at protein level"/>
<protein>
    <recommendedName>
        <fullName>Uncharacterized N-acetyltransferase YjcF</fullName>
        <ecNumber>2.3.1.-</ecNumber>
    </recommendedName>
</protein>
<dbReference type="EC" id="2.3.1.-"/>
<dbReference type="EMBL" id="AL009126">
    <property type="protein sequence ID" value="CAB13041.1"/>
    <property type="molecule type" value="Genomic_DNA"/>
</dbReference>
<dbReference type="PIR" id="F69846">
    <property type="entry name" value="F69846"/>
</dbReference>
<dbReference type="RefSeq" id="NP_389066.1">
    <property type="nucleotide sequence ID" value="NC_000964.3"/>
</dbReference>
<dbReference type="RefSeq" id="WP_003245407.1">
    <property type="nucleotide sequence ID" value="NZ_OZ025638.1"/>
</dbReference>
<dbReference type="PDB" id="1Q2Y">
    <property type="method" value="X-ray"/>
    <property type="resolution" value="2.00 A"/>
    <property type="chains" value="A=1-140"/>
</dbReference>
<dbReference type="PDBsum" id="1Q2Y"/>
<dbReference type="SMR" id="O31628"/>
<dbReference type="FunCoup" id="O31628">
    <property type="interactions" value="37"/>
</dbReference>
<dbReference type="STRING" id="224308.BSU11840"/>
<dbReference type="PaxDb" id="224308-BSU11840"/>
<dbReference type="EnsemblBacteria" id="CAB13041">
    <property type="protein sequence ID" value="CAB13041"/>
    <property type="gene ID" value="BSU_11840"/>
</dbReference>
<dbReference type="GeneID" id="939387"/>
<dbReference type="KEGG" id="bsu:BSU11840"/>
<dbReference type="PATRIC" id="fig|224308.179.peg.1275"/>
<dbReference type="eggNOG" id="COG2153">
    <property type="taxonomic scope" value="Bacteria"/>
</dbReference>
<dbReference type="InParanoid" id="O31628"/>
<dbReference type="OrthoDB" id="9796171at2"/>
<dbReference type="PhylomeDB" id="O31628"/>
<dbReference type="BioCyc" id="BSUB:BSU11840-MONOMER"/>
<dbReference type="EvolutionaryTrace" id="O31628"/>
<dbReference type="Proteomes" id="UP000001570">
    <property type="component" value="Chromosome"/>
</dbReference>
<dbReference type="GO" id="GO:0008080">
    <property type="term" value="F:N-acetyltransferase activity"/>
    <property type="evidence" value="ECO:0000318"/>
    <property type="project" value="GO_Central"/>
</dbReference>
<dbReference type="CDD" id="cd04301">
    <property type="entry name" value="NAT_SF"/>
    <property type="match status" value="1"/>
</dbReference>
<dbReference type="Gene3D" id="3.40.630.30">
    <property type="match status" value="1"/>
</dbReference>
<dbReference type="InterPro" id="IPR016181">
    <property type="entry name" value="Acyl_CoA_acyltransferase"/>
</dbReference>
<dbReference type="InterPro" id="IPR000182">
    <property type="entry name" value="GNAT_dom"/>
</dbReference>
<dbReference type="InterPro" id="IPR039143">
    <property type="entry name" value="GNPNAT1-like"/>
</dbReference>
<dbReference type="PANTHER" id="PTHR13355">
    <property type="entry name" value="GLUCOSAMINE 6-PHOSPHATE N-ACETYLTRANSFERASE"/>
    <property type="match status" value="1"/>
</dbReference>
<dbReference type="PANTHER" id="PTHR13355:SF11">
    <property type="entry name" value="GLUCOSAMINE 6-PHOSPHATE N-ACETYLTRANSFERASE"/>
    <property type="match status" value="1"/>
</dbReference>
<dbReference type="Pfam" id="PF13673">
    <property type="entry name" value="Acetyltransf_10"/>
    <property type="match status" value="1"/>
</dbReference>
<dbReference type="SUPFAM" id="SSF55729">
    <property type="entry name" value="Acyl-CoA N-acyltransferases (Nat)"/>
    <property type="match status" value="1"/>
</dbReference>
<dbReference type="PROSITE" id="PS51186">
    <property type="entry name" value="GNAT"/>
    <property type="match status" value="1"/>
</dbReference>
<keyword id="KW-0002">3D-structure</keyword>
<keyword id="KW-0012">Acyltransferase</keyword>
<keyword id="KW-1185">Reference proteome</keyword>
<keyword id="KW-0808">Transferase</keyword>
<comment type="similarity">
    <text evidence="2">Belongs to the acetyltransferase family.</text>
</comment>
<sequence>MKAVIAKNEEQLKDAFYVREEVFVKEQNVPAEEEIDELENESEHIVVYDGEKPVGAGRWRMKDGYGKLERICVLKSHRSAGVGGIIMKALEKAAADGGASGFILNAQTQAVPFYKKHGYRVLSEKEFLDAGIPHLQMMKD</sequence>